<organism>
    <name type="scientific">Homo sapiens</name>
    <name type="common">Human</name>
    <dbReference type="NCBI Taxonomy" id="9606"/>
    <lineage>
        <taxon>Eukaryota</taxon>
        <taxon>Metazoa</taxon>
        <taxon>Chordata</taxon>
        <taxon>Craniata</taxon>
        <taxon>Vertebrata</taxon>
        <taxon>Euteleostomi</taxon>
        <taxon>Mammalia</taxon>
        <taxon>Eutheria</taxon>
        <taxon>Euarchontoglires</taxon>
        <taxon>Primates</taxon>
        <taxon>Haplorrhini</taxon>
        <taxon>Catarrhini</taxon>
        <taxon>Hominidae</taxon>
        <taxon>Homo</taxon>
    </lineage>
</organism>
<keyword id="KW-1267">Proteomics identification</keyword>
<keyword id="KW-1185">Reference proteome</keyword>
<gene>
    <name type="primary">OXLD1</name>
    <name type="synonym">C17orf90</name>
</gene>
<feature type="chain" id="PRO_0000314123" description="Oxidoreductase-like domain-containing protein 1">
    <location>
        <begin position="1"/>
        <end position="147"/>
    </location>
</feature>
<feature type="domain" description="Oxidoreductase-like">
    <location>
        <begin position="81"/>
        <end position="108"/>
    </location>
</feature>
<feature type="region of interest" description="Disordered" evidence="1">
    <location>
        <begin position="36"/>
        <end position="82"/>
    </location>
</feature>
<feature type="compositionally biased region" description="Basic and acidic residues" evidence="1">
    <location>
        <begin position="52"/>
        <end position="63"/>
    </location>
</feature>
<feature type="sequence conflict" description="In Ref. 1; AC139530." evidence="2" ref="1">
    <original>R</original>
    <variation>L</variation>
    <location>
        <position position="18"/>
    </location>
</feature>
<reference key="1">
    <citation type="journal article" date="2006" name="Nature">
        <title>DNA sequence of human chromosome 17 and analysis of rearrangement in the human lineage.</title>
        <authorList>
            <person name="Zody M.C."/>
            <person name="Garber M."/>
            <person name="Adams D.J."/>
            <person name="Sharpe T."/>
            <person name="Harrow J."/>
            <person name="Lupski J.R."/>
            <person name="Nicholson C."/>
            <person name="Searle S.M."/>
            <person name="Wilming L."/>
            <person name="Young S.K."/>
            <person name="Abouelleil A."/>
            <person name="Allen N.R."/>
            <person name="Bi W."/>
            <person name="Bloom T."/>
            <person name="Borowsky M.L."/>
            <person name="Bugalter B.E."/>
            <person name="Butler J."/>
            <person name="Chang J.L."/>
            <person name="Chen C.-K."/>
            <person name="Cook A."/>
            <person name="Corum B."/>
            <person name="Cuomo C.A."/>
            <person name="de Jong P.J."/>
            <person name="DeCaprio D."/>
            <person name="Dewar K."/>
            <person name="FitzGerald M."/>
            <person name="Gilbert J."/>
            <person name="Gibson R."/>
            <person name="Gnerre S."/>
            <person name="Goldstein S."/>
            <person name="Grafham D.V."/>
            <person name="Grocock R."/>
            <person name="Hafez N."/>
            <person name="Hagopian D.S."/>
            <person name="Hart E."/>
            <person name="Norman C.H."/>
            <person name="Humphray S."/>
            <person name="Jaffe D.B."/>
            <person name="Jones M."/>
            <person name="Kamal M."/>
            <person name="Khodiyar V.K."/>
            <person name="LaButti K."/>
            <person name="Laird G."/>
            <person name="Lehoczky J."/>
            <person name="Liu X."/>
            <person name="Lokyitsang T."/>
            <person name="Loveland J."/>
            <person name="Lui A."/>
            <person name="Macdonald P."/>
            <person name="Major J.E."/>
            <person name="Matthews L."/>
            <person name="Mauceli E."/>
            <person name="McCarroll S.A."/>
            <person name="Mihalev A.H."/>
            <person name="Mudge J."/>
            <person name="Nguyen C."/>
            <person name="Nicol R."/>
            <person name="O'Leary S.B."/>
            <person name="Osoegawa K."/>
            <person name="Schwartz D.C."/>
            <person name="Shaw-Smith C."/>
            <person name="Stankiewicz P."/>
            <person name="Steward C."/>
            <person name="Swarbreck D."/>
            <person name="Venkataraman V."/>
            <person name="Whittaker C.A."/>
            <person name="Yang X."/>
            <person name="Zimmer A.R."/>
            <person name="Bradley A."/>
            <person name="Hubbard T."/>
            <person name="Birren B.W."/>
            <person name="Rogers J."/>
            <person name="Lander E.S."/>
            <person name="Nusbaum C."/>
        </authorList>
    </citation>
    <scope>NUCLEOTIDE SEQUENCE [LARGE SCALE GENOMIC DNA]</scope>
</reference>
<reference key="2">
    <citation type="journal article" date="2004" name="Genome Res.">
        <title>The status, quality, and expansion of the NIH full-length cDNA project: the Mammalian Gene Collection (MGC).</title>
        <authorList>
            <consortium name="The MGC Project Team"/>
        </authorList>
    </citation>
    <scope>NUCLEOTIDE SEQUENCE [LARGE SCALE MRNA]</scope>
    <source>
        <tissue>Placenta</tissue>
    </source>
</reference>
<protein>
    <recommendedName>
        <fullName>Oxidoreductase-like domain-containing protein 1</fullName>
    </recommendedName>
</protein>
<evidence type="ECO:0000256" key="1">
    <source>
        <dbReference type="SAM" id="MobiDB-lite"/>
    </source>
</evidence>
<evidence type="ECO:0000305" key="2"/>
<proteinExistence type="evidence at protein level"/>
<sequence>MLLRRVVEGGRAVAAAVRGSGARRFSSPDCCQRLPGGGSFLQRHHPGAQAPDGRRKFGTDHVEVGSQAGADGTRPPKASLPPELQPPTNCCMSGCPNCVWVEYADRLLQHFQDGGERALAALEEHVADENLKAFLRMEIRLHTRCGG</sequence>
<dbReference type="EMBL" id="AC139530">
    <property type="status" value="NOT_ANNOTATED_CDS"/>
    <property type="molecule type" value="Genomic_DNA"/>
</dbReference>
<dbReference type="EMBL" id="BC090923">
    <property type="protein sequence ID" value="AAH90923.1"/>
    <property type="molecule type" value="mRNA"/>
</dbReference>
<dbReference type="CCDS" id="CCDS32766.1"/>
<dbReference type="RefSeq" id="NP_001034931.1">
    <property type="nucleotide sequence ID" value="NM_001039842.3"/>
</dbReference>
<dbReference type="BioGRID" id="130845">
    <property type="interactions" value="59"/>
</dbReference>
<dbReference type="FunCoup" id="Q5BKU9">
    <property type="interactions" value="154"/>
</dbReference>
<dbReference type="IntAct" id="Q5BKU9">
    <property type="interactions" value="43"/>
</dbReference>
<dbReference type="STRING" id="9606.ENSP00000363873"/>
<dbReference type="BioMuta" id="OXLD1"/>
<dbReference type="DMDM" id="74736039"/>
<dbReference type="jPOST" id="Q5BKU9"/>
<dbReference type="MassIVE" id="Q5BKU9"/>
<dbReference type="PaxDb" id="9606-ENSP00000363873"/>
<dbReference type="PeptideAtlas" id="Q5BKU9"/>
<dbReference type="ProteomicsDB" id="62700"/>
<dbReference type="Pumba" id="Q5BKU9"/>
<dbReference type="Antibodypedia" id="70942">
    <property type="antibodies" value="8 antibodies from 4 providers"/>
</dbReference>
<dbReference type="DNASU" id="339229"/>
<dbReference type="Ensembl" id="ENST00000374741.4">
    <property type="protein sequence ID" value="ENSP00000363873.3"/>
    <property type="gene ID" value="ENSG00000204237.5"/>
</dbReference>
<dbReference type="GeneID" id="339229"/>
<dbReference type="KEGG" id="hsa:339229"/>
<dbReference type="MANE-Select" id="ENST00000374741.4">
    <property type="protein sequence ID" value="ENSP00000363873.3"/>
    <property type="RefSeq nucleotide sequence ID" value="NM_001039842.3"/>
    <property type="RefSeq protein sequence ID" value="NP_001034931.1"/>
</dbReference>
<dbReference type="UCSC" id="uc002kba.3">
    <property type="organism name" value="human"/>
</dbReference>
<dbReference type="AGR" id="HGNC:27901"/>
<dbReference type="CTD" id="339229"/>
<dbReference type="GeneCards" id="OXLD1"/>
<dbReference type="HGNC" id="HGNC:27901">
    <property type="gene designation" value="OXLD1"/>
</dbReference>
<dbReference type="HPA" id="ENSG00000204237">
    <property type="expression patterns" value="Low tissue specificity"/>
</dbReference>
<dbReference type="neXtProt" id="NX_Q5BKU9"/>
<dbReference type="OpenTargets" id="ENSG00000204237"/>
<dbReference type="PharmGKB" id="PA162378543"/>
<dbReference type="VEuPathDB" id="HostDB:ENSG00000204237"/>
<dbReference type="eggNOG" id="ENOG502S74Z">
    <property type="taxonomic scope" value="Eukaryota"/>
</dbReference>
<dbReference type="GeneTree" id="ENSGT00390000003596"/>
<dbReference type="HOGENOM" id="CLU_144239_0_0_1"/>
<dbReference type="InParanoid" id="Q5BKU9"/>
<dbReference type="OMA" id="RKFGKDH"/>
<dbReference type="OrthoDB" id="10064411at2759"/>
<dbReference type="PAN-GO" id="Q5BKU9">
    <property type="GO annotations" value="0 GO annotations based on evolutionary models"/>
</dbReference>
<dbReference type="PhylomeDB" id="Q5BKU9"/>
<dbReference type="TreeFam" id="TF353117"/>
<dbReference type="PathwayCommons" id="Q5BKU9"/>
<dbReference type="SignaLink" id="Q5BKU9"/>
<dbReference type="BioGRID-ORCS" id="339229">
    <property type="hits" value="36 hits in 1150 CRISPR screens"/>
</dbReference>
<dbReference type="ChiTaRS" id="OXLD1">
    <property type="organism name" value="human"/>
</dbReference>
<dbReference type="GenomeRNAi" id="339229"/>
<dbReference type="Pharos" id="Q5BKU9">
    <property type="development level" value="Tdark"/>
</dbReference>
<dbReference type="PRO" id="PR:Q5BKU9"/>
<dbReference type="Proteomes" id="UP000005640">
    <property type="component" value="Chromosome 17"/>
</dbReference>
<dbReference type="RNAct" id="Q5BKU9">
    <property type="molecule type" value="protein"/>
</dbReference>
<dbReference type="Bgee" id="ENSG00000204237">
    <property type="expression patterns" value="Expressed in mucosa of transverse colon and 183 other cell types or tissues"/>
</dbReference>
<dbReference type="ExpressionAtlas" id="Q5BKU9">
    <property type="expression patterns" value="baseline and differential"/>
</dbReference>
<dbReference type="GO" id="GO:0005739">
    <property type="term" value="C:mitochondrion"/>
    <property type="evidence" value="ECO:0006056"/>
    <property type="project" value="FlyBase"/>
</dbReference>
<dbReference type="InterPro" id="IPR019180">
    <property type="entry name" value="Oxidoreductase-like_N"/>
</dbReference>
<dbReference type="InterPro" id="IPR039251">
    <property type="entry name" value="OXLD1"/>
</dbReference>
<dbReference type="PANTHER" id="PTHR21193">
    <property type="entry name" value="OXIDOREDUCTASE-LIKE DOMAIN-CONTAINING PROTEIN 1"/>
    <property type="match status" value="1"/>
</dbReference>
<dbReference type="PANTHER" id="PTHR21193:SF3">
    <property type="entry name" value="OXIDOREDUCTASE-LIKE DOMAIN-CONTAINING PROTEIN 1"/>
    <property type="match status" value="1"/>
</dbReference>
<dbReference type="Pfam" id="PF09791">
    <property type="entry name" value="Oxidored-like"/>
    <property type="match status" value="1"/>
</dbReference>
<name>OXLD1_HUMAN</name>
<accession>Q5BKU9</accession>
<accession>A6ND24</accession>